<protein>
    <recommendedName>
        <fullName evidence="1">ATP-dependent protease subunit HslV</fullName>
        <ecNumber evidence="1">3.4.25.2</ecNumber>
    </recommendedName>
</protein>
<sequence length="180" mass="19236">MGAFHATTIFAIRHNGASAMAGDGQVTFGNAVVMKHTAKKVRRLFQGNVLAGFAGSVADAFTLFEMFEGKLEQWNGNLPRAAVELAKEWRSDKVLRRLEAMLIVMDKQHLLLVSGTGEVIEPDDGMLAIGSGGQYALAAGRALKKYAGGSMTAKEIAKAALEIAADICVYTNGHIIVEEL</sequence>
<comment type="function">
    <text evidence="1">Protease subunit of a proteasome-like degradation complex believed to be a general protein degrading machinery.</text>
</comment>
<comment type="catalytic activity">
    <reaction evidence="1">
        <text>ATP-dependent cleavage of peptide bonds with broad specificity.</text>
        <dbReference type="EC" id="3.4.25.2"/>
    </reaction>
</comment>
<comment type="activity regulation">
    <text evidence="1">Allosterically activated by HslU binding.</text>
</comment>
<comment type="subunit">
    <text evidence="1">A double ring-shaped homohexamer of HslV is capped on each side by a ring-shaped HslU homohexamer. The assembly of the HslU/HslV complex is dependent on binding of ATP.</text>
</comment>
<comment type="subcellular location">
    <subcellularLocation>
        <location evidence="1">Cytoplasm</location>
    </subcellularLocation>
</comment>
<comment type="similarity">
    <text evidence="1">Belongs to the peptidase T1B family. HslV subfamily.</text>
</comment>
<proteinExistence type="inferred from homology"/>
<evidence type="ECO:0000255" key="1">
    <source>
        <dbReference type="HAMAP-Rule" id="MF_00248"/>
    </source>
</evidence>
<reference key="1">
    <citation type="journal article" date="2004" name="Nucleic Acids Res.">
        <title>Thermoadaptation trait revealed by the genome sequence of thermophilic Geobacillus kaustophilus.</title>
        <authorList>
            <person name="Takami H."/>
            <person name="Takaki Y."/>
            <person name="Chee G.-J."/>
            <person name="Nishi S."/>
            <person name="Shimamura S."/>
            <person name="Suzuki H."/>
            <person name="Matsui S."/>
            <person name="Uchiyama I."/>
        </authorList>
    </citation>
    <scope>NUCLEOTIDE SEQUENCE [LARGE SCALE GENOMIC DNA]</scope>
    <source>
        <strain>HTA426</strain>
    </source>
</reference>
<dbReference type="EC" id="3.4.25.2" evidence="1"/>
<dbReference type="EMBL" id="BA000043">
    <property type="protein sequence ID" value="BAD75498.1"/>
    <property type="molecule type" value="Genomic_DNA"/>
</dbReference>
<dbReference type="RefSeq" id="WP_011230713.1">
    <property type="nucleotide sequence ID" value="NC_006510.1"/>
</dbReference>
<dbReference type="SMR" id="Q5L0N2"/>
<dbReference type="STRING" id="235909.GK1213"/>
<dbReference type="MEROPS" id="T01.007"/>
<dbReference type="KEGG" id="gka:GK1213"/>
<dbReference type="eggNOG" id="COG5405">
    <property type="taxonomic scope" value="Bacteria"/>
</dbReference>
<dbReference type="HOGENOM" id="CLU_093872_1_1_9"/>
<dbReference type="Proteomes" id="UP000001172">
    <property type="component" value="Chromosome"/>
</dbReference>
<dbReference type="GO" id="GO:0009376">
    <property type="term" value="C:HslUV protease complex"/>
    <property type="evidence" value="ECO:0007669"/>
    <property type="project" value="UniProtKB-UniRule"/>
</dbReference>
<dbReference type="GO" id="GO:0005839">
    <property type="term" value="C:proteasome core complex"/>
    <property type="evidence" value="ECO:0007669"/>
    <property type="project" value="InterPro"/>
</dbReference>
<dbReference type="GO" id="GO:0046872">
    <property type="term" value="F:metal ion binding"/>
    <property type="evidence" value="ECO:0007669"/>
    <property type="project" value="UniProtKB-KW"/>
</dbReference>
<dbReference type="GO" id="GO:0004298">
    <property type="term" value="F:threonine-type endopeptidase activity"/>
    <property type="evidence" value="ECO:0007669"/>
    <property type="project" value="UniProtKB-KW"/>
</dbReference>
<dbReference type="GO" id="GO:0051603">
    <property type="term" value="P:proteolysis involved in protein catabolic process"/>
    <property type="evidence" value="ECO:0007669"/>
    <property type="project" value="InterPro"/>
</dbReference>
<dbReference type="CDD" id="cd01913">
    <property type="entry name" value="protease_HslV"/>
    <property type="match status" value="1"/>
</dbReference>
<dbReference type="Gene3D" id="3.60.20.10">
    <property type="entry name" value="Glutamine Phosphoribosylpyrophosphate, subunit 1, domain 1"/>
    <property type="match status" value="1"/>
</dbReference>
<dbReference type="HAMAP" id="MF_00248">
    <property type="entry name" value="HslV"/>
    <property type="match status" value="1"/>
</dbReference>
<dbReference type="InterPro" id="IPR022281">
    <property type="entry name" value="ATP-dep_Prtase_HsIV_su"/>
</dbReference>
<dbReference type="InterPro" id="IPR029055">
    <property type="entry name" value="Ntn_hydrolases_N"/>
</dbReference>
<dbReference type="InterPro" id="IPR001353">
    <property type="entry name" value="Proteasome_sua/b"/>
</dbReference>
<dbReference type="InterPro" id="IPR023333">
    <property type="entry name" value="Proteasome_suB-type"/>
</dbReference>
<dbReference type="NCBIfam" id="TIGR03692">
    <property type="entry name" value="ATP_dep_HslV"/>
    <property type="match status" value="1"/>
</dbReference>
<dbReference type="NCBIfam" id="NF003964">
    <property type="entry name" value="PRK05456.1"/>
    <property type="match status" value="1"/>
</dbReference>
<dbReference type="PANTHER" id="PTHR32194:SF0">
    <property type="entry name" value="ATP-DEPENDENT PROTEASE SUBUNIT HSLV"/>
    <property type="match status" value="1"/>
</dbReference>
<dbReference type="PANTHER" id="PTHR32194">
    <property type="entry name" value="METALLOPROTEASE TLDD"/>
    <property type="match status" value="1"/>
</dbReference>
<dbReference type="Pfam" id="PF00227">
    <property type="entry name" value="Proteasome"/>
    <property type="match status" value="1"/>
</dbReference>
<dbReference type="PIRSF" id="PIRSF039093">
    <property type="entry name" value="HslV"/>
    <property type="match status" value="1"/>
</dbReference>
<dbReference type="SUPFAM" id="SSF56235">
    <property type="entry name" value="N-terminal nucleophile aminohydrolases (Ntn hydrolases)"/>
    <property type="match status" value="1"/>
</dbReference>
<dbReference type="PROSITE" id="PS51476">
    <property type="entry name" value="PROTEASOME_BETA_2"/>
    <property type="match status" value="1"/>
</dbReference>
<feature type="chain" id="PRO_1000012612" description="ATP-dependent protease subunit HslV">
    <location>
        <begin position="1"/>
        <end position="180"/>
    </location>
</feature>
<feature type="active site" evidence="1">
    <location>
        <position position="7"/>
    </location>
</feature>
<feature type="binding site" evidence="1">
    <location>
        <position position="165"/>
    </location>
    <ligand>
        <name>Na(+)</name>
        <dbReference type="ChEBI" id="CHEBI:29101"/>
    </ligand>
</feature>
<feature type="binding site" evidence="1">
    <location>
        <position position="168"/>
    </location>
    <ligand>
        <name>Na(+)</name>
        <dbReference type="ChEBI" id="CHEBI:29101"/>
    </ligand>
</feature>
<feature type="binding site" evidence="1">
    <location>
        <position position="171"/>
    </location>
    <ligand>
        <name>Na(+)</name>
        <dbReference type="ChEBI" id="CHEBI:29101"/>
    </ligand>
</feature>
<organism>
    <name type="scientific">Geobacillus kaustophilus (strain HTA426)</name>
    <dbReference type="NCBI Taxonomy" id="235909"/>
    <lineage>
        <taxon>Bacteria</taxon>
        <taxon>Bacillati</taxon>
        <taxon>Bacillota</taxon>
        <taxon>Bacilli</taxon>
        <taxon>Bacillales</taxon>
        <taxon>Anoxybacillaceae</taxon>
        <taxon>Geobacillus</taxon>
        <taxon>Geobacillus thermoleovorans group</taxon>
    </lineage>
</organism>
<name>HSLV_GEOKA</name>
<accession>Q5L0N2</accession>
<keyword id="KW-0021">Allosteric enzyme</keyword>
<keyword id="KW-0963">Cytoplasm</keyword>
<keyword id="KW-0378">Hydrolase</keyword>
<keyword id="KW-0479">Metal-binding</keyword>
<keyword id="KW-0645">Protease</keyword>
<keyword id="KW-1185">Reference proteome</keyword>
<keyword id="KW-0915">Sodium</keyword>
<keyword id="KW-0888">Threonine protease</keyword>
<gene>
    <name evidence="1" type="primary">hslV</name>
    <name type="ordered locus">GK1213</name>
</gene>